<sequence>MSEVSSVVNRIRRATIERVTGETNITLTLTIDGSGQADVQTGIGFLDHMLTLWARHGLFDLQVRAQGDLHIDEHHTAEDVCICLGRAIDQALGERAGIVRTAHSFVPMDEALALVAVDLGGRPYCVVQADFVTMRVGQLGTDLVAHLFESVAFNGRFNLHAQVMYGRNDHHKIEALFKAFGRALDAATRIDARLGGTIPSTKGVL</sequence>
<protein>
    <recommendedName>
        <fullName evidence="1">Imidazoleglycerol-phosphate dehydratase</fullName>
        <shortName evidence="1">IGPD</shortName>
        <ecNumber evidence="1">4.2.1.19</ecNumber>
    </recommendedName>
</protein>
<accession>A9WDZ1</accession>
<dbReference type="EC" id="4.2.1.19" evidence="1"/>
<dbReference type="EMBL" id="CP000909">
    <property type="protein sequence ID" value="ABY35150.1"/>
    <property type="molecule type" value="Genomic_DNA"/>
</dbReference>
<dbReference type="RefSeq" id="WP_012257804.1">
    <property type="nucleotide sequence ID" value="NC_010175.1"/>
</dbReference>
<dbReference type="RefSeq" id="YP_001635539.1">
    <property type="nucleotide sequence ID" value="NC_010175.1"/>
</dbReference>
<dbReference type="SMR" id="A9WDZ1"/>
<dbReference type="FunCoup" id="A9WDZ1">
    <property type="interactions" value="393"/>
</dbReference>
<dbReference type="STRING" id="324602.Caur_1935"/>
<dbReference type="EnsemblBacteria" id="ABY35150">
    <property type="protein sequence ID" value="ABY35150"/>
    <property type="gene ID" value="Caur_1935"/>
</dbReference>
<dbReference type="KEGG" id="cau:Caur_1935"/>
<dbReference type="PATRIC" id="fig|324602.8.peg.2204"/>
<dbReference type="eggNOG" id="COG0131">
    <property type="taxonomic scope" value="Bacteria"/>
</dbReference>
<dbReference type="HOGENOM" id="CLU_044308_3_0_0"/>
<dbReference type="InParanoid" id="A9WDZ1"/>
<dbReference type="UniPathway" id="UPA00031">
    <property type="reaction ID" value="UER00011"/>
</dbReference>
<dbReference type="Proteomes" id="UP000002008">
    <property type="component" value="Chromosome"/>
</dbReference>
<dbReference type="GO" id="GO:0005737">
    <property type="term" value="C:cytoplasm"/>
    <property type="evidence" value="ECO:0007669"/>
    <property type="project" value="UniProtKB-SubCell"/>
</dbReference>
<dbReference type="GO" id="GO:0004424">
    <property type="term" value="F:imidazoleglycerol-phosphate dehydratase activity"/>
    <property type="evidence" value="ECO:0000318"/>
    <property type="project" value="GO_Central"/>
</dbReference>
<dbReference type="GO" id="GO:0000105">
    <property type="term" value="P:L-histidine biosynthetic process"/>
    <property type="evidence" value="ECO:0000318"/>
    <property type="project" value="GO_Central"/>
</dbReference>
<dbReference type="CDD" id="cd07914">
    <property type="entry name" value="IGPD"/>
    <property type="match status" value="1"/>
</dbReference>
<dbReference type="FunFam" id="3.30.230.40:FF:000001">
    <property type="entry name" value="Imidazoleglycerol-phosphate dehydratase HisB"/>
    <property type="match status" value="1"/>
</dbReference>
<dbReference type="FunFam" id="3.30.230.40:FF:000003">
    <property type="entry name" value="Imidazoleglycerol-phosphate dehydratase HisB"/>
    <property type="match status" value="1"/>
</dbReference>
<dbReference type="Gene3D" id="3.30.230.40">
    <property type="entry name" value="Imidazole glycerol phosphate dehydratase, domain 1"/>
    <property type="match status" value="2"/>
</dbReference>
<dbReference type="HAMAP" id="MF_00076">
    <property type="entry name" value="HisB"/>
    <property type="match status" value="1"/>
</dbReference>
<dbReference type="InterPro" id="IPR038494">
    <property type="entry name" value="IGPD_sf"/>
</dbReference>
<dbReference type="InterPro" id="IPR000807">
    <property type="entry name" value="ImidazoleglycerolP_deHydtase"/>
</dbReference>
<dbReference type="InterPro" id="IPR020565">
    <property type="entry name" value="ImidazoleglycerP_deHydtase_CS"/>
</dbReference>
<dbReference type="InterPro" id="IPR020568">
    <property type="entry name" value="Ribosomal_Su5_D2-typ_SF"/>
</dbReference>
<dbReference type="NCBIfam" id="NF002111">
    <property type="entry name" value="PRK00951.2-1"/>
    <property type="match status" value="1"/>
</dbReference>
<dbReference type="NCBIfam" id="NF002114">
    <property type="entry name" value="PRK00951.2-4"/>
    <property type="match status" value="1"/>
</dbReference>
<dbReference type="NCBIfam" id="NF002116">
    <property type="entry name" value="PRK00951.2-6"/>
    <property type="match status" value="1"/>
</dbReference>
<dbReference type="PANTHER" id="PTHR23133:SF2">
    <property type="entry name" value="IMIDAZOLEGLYCEROL-PHOSPHATE DEHYDRATASE"/>
    <property type="match status" value="1"/>
</dbReference>
<dbReference type="PANTHER" id="PTHR23133">
    <property type="entry name" value="IMIDAZOLEGLYCEROL-PHOSPHATE DEHYDRATASE HIS7"/>
    <property type="match status" value="1"/>
</dbReference>
<dbReference type="Pfam" id="PF00475">
    <property type="entry name" value="IGPD"/>
    <property type="match status" value="1"/>
</dbReference>
<dbReference type="SUPFAM" id="SSF54211">
    <property type="entry name" value="Ribosomal protein S5 domain 2-like"/>
    <property type="match status" value="2"/>
</dbReference>
<dbReference type="PROSITE" id="PS00954">
    <property type="entry name" value="IGP_DEHYDRATASE_1"/>
    <property type="match status" value="1"/>
</dbReference>
<dbReference type="PROSITE" id="PS00955">
    <property type="entry name" value="IGP_DEHYDRATASE_2"/>
    <property type="match status" value="1"/>
</dbReference>
<proteinExistence type="inferred from homology"/>
<organism>
    <name type="scientific">Chloroflexus aurantiacus (strain ATCC 29366 / DSM 635 / J-10-fl)</name>
    <dbReference type="NCBI Taxonomy" id="324602"/>
    <lineage>
        <taxon>Bacteria</taxon>
        <taxon>Bacillati</taxon>
        <taxon>Chloroflexota</taxon>
        <taxon>Chloroflexia</taxon>
        <taxon>Chloroflexales</taxon>
        <taxon>Chloroflexineae</taxon>
        <taxon>Chloroflexaceae</taxon>
        <taxon>Chloroflexus</taxon>
    </lineage>
</organism>
<gene>
    <name evidence="1" type="primary">hisB</name>
    <name type="ordered locus">Caur_1935</name>
</gene>
<keyword id="KW-0028">Amino-acid biosynthesis</keyword>
<keyword id="KW-0963">Cytoplasm</keyword>
<keyword id="KW-0368">Histidine biosynthesis</keyword>
<keyword id="KW-0456">Lyase</keyword>
<keyword id="KW-1185">Reference proteome</keyword>
<feature type="chain" id="PRO_0000336303" description="Imidazoleglycerol-phosphate dehydratase">
    <location>
        <begin position="1"/>
        <end position="205"/>
    </location>
</feature>
<reference key="1">
    <citation type="journal article" date="2011" name="BMC Genomics">
        <title>Complete genome sequence of the filamentous anoxygenic phototrophic bacterium Chloroflexus aurantiacus.</title>
        <authorList>
            <person name="Tang K.H."/>
            <person name="Barry K."/>
            <person name="Chertkov O."/>
            <person name="Dalin E."/>
            <person name="Han C.S."/>
            <person name="Hauser L.J."/>
            <person name="Honchak B.M."/>
            <person name="Karbach L.E."/>
            <person name="Land M.L."/>
            <person name="Lapidus A."/>
            <person name="Larimer F.W."/>
            <person name="Mikhailova N."/>
            <person name="Pitluck S."/>
            <person name="Pierson B.K."/>
            <person name="Blankenship R.E."/>
        </authorList>
    </citation>
    <scope>NUCLEOTIDE SEQUENCE [LARGE SCALE GENOMIC DNA]</scope>
    <source>
        <strain>ATCC 29366 / DSM 635 / J-10-fl</strain>
    </source>
</reference>
<comment type="catalytic activity">
    <reaction evidence="1">
        <text>D-erythro-1-(imidazol-4-yl)glycerol 3-phosphate = 3-(imidazol-4-yl)-2-oxopropyl phosphate + H2O</text>
        <dbReference type="Rhea" id="RHEA:11040"/>
        <dbReference type="ChEBI" id="CHEBI:15377"/>
        <dbReference type="ChEBI" id="CHEBI:57766"/>
        <dbReference type="ChEBI" id="CHEBI:58278"/>
        <dbReference type="EC" id="4.2.1.19"/>
    </reaction>
</comment>
<comment type="pathway">
    <text evidence="1">Amino-acid biosynthesis; L-histidine biosynthesis; L-histidine from 5-phospho-alpha-D-ribose 1-diphosphate: step 6/9.</text>
</comment>
<comment type="subcellular location">
    <subcellularLocation>
        <location evidence="1">Cytoplasm</location>
    </subcellularLocation>
</comment>
<comment type="similarity">
    <text evidence="1">Belongs to the imidazoleglycerol-phosphate dehydratase family.</text>
</comment>
<name>HIS7_CHLAA</name>
<evidence type="ECO:0000255" key="1">
    <source>
        <dbReference type="HAMAP-Rule" id="MF_00076"/>
    </source>
</evidence>